<dbReference type="EC" id="4.3.3.7" evidence="1"/>
<dbReference type="EMBL" id="CP000471">
    <property type="protein sequence ID" value="ABK45958.1"/>
    <property type="molecule type" value="Genomic_DNA"/>
</dbReference>
<dbReference type="RefSeq" id="WP_011715014.1">
    <property type="nucleotide sequence ID" value="NC_008576.1"/>
</dbReference>
<dbReference type="SMR" id="A0LDB5"/>
<dbReference type="STRING" id="156889.Mmc1_3473"/>
<dbReference type="KEGG" id="mgm:Mmc1_3473"/>
<dbReference type="eggNOG" id="COG0329">
    <property type="taxonomic scope" value="Bacteria"/>
</dbReference>
<dbReference type="HOGENOM" id="CLU_049343_7_0_5"/>
<dbReference type="OrthoDB" id="9782828at2"/>
<dbReference type="UniPathway" id="UPA00034">
    <property type="reaction ID" value="UER00017"/>
</dbReference>
<dbReference type="Proteomes" id="UP000002586">
    <property type="component" value="Chromosome"/>
</dbReference>
<dbReference type="GO" id="GO:0005829">
    <property type="term" value="C:cytosol"/>
    <property type="evidence" value="ECO:0007669"/>
    <property type="project" value="TreeGrafter"/>
</dbReference>
<dbReference type="GO" id="GO:0008840">
    <property type="term" value="F:4-hydroxy-tetrahydrodipicolinate synthase activity"/>
    <property type="evidence" value="ECO:0007669"/>
    <property type="project" value="UniProtKB-UniRule"/>
</dbReference>
<dbReference type="GO" id="GO:0019877">
    <property type="term" value="P:diaminopimelate biosynthetic process"/>
    <property type="evidence" value="ECO:0007669"/>
    <property type="project" value="UniProtKB-UniRule"/>
</dbReference>
<dbReference type="GO" id="GO:0009089">
    <property type="term" value="P:lysine biosynthetic process via diaminopimelate"/>
    <property type="evidence" value="ECO:0007669"/>
    <property type="project" value="UniProtKB-UniRule"/>
</dbReference>
<dbReference type="CDD" id="cd00950">
    <property type="entry name" value="DHDPS"/>
    <property type="match status" value="1"/>
</dbReference>
<dbReference type="Gene3D" id="3.20.20.70">
    <property type="entry name" value="Aldolase class I"/>
    <property type="match status" value="1"/>
</dbReference>
<dbReference type="HAMAP" id="MF_00418">
    <property type="entry name" value="DapA"/>
    <property type="match status" value="1"/>
</dbReference>
<dbReference type="InterPro" id="IPR013785">
    <property type="entry name" value="Aldolase_TIM"/>
</dbReference>
<dbReference type="InterPro" id="IPR005263">
    <property type="entry name" value="DapA"/>
</dbReference>
<dbReference type="InterPro" id="IPR002220">
    <property type="entry name" value="DapA-like"/>
</dbReference>
<dbReference type="InterPro" id="IPR020625">
    <property type="entry name" value="Schiff_base-form_aldolases_AS"/>
</dbReference>
<dbReference type="InterPro" id="IPR020624">
    <property type="entry name" value="Schiff_base-form_aldolases_CS"/>
</dbReference>
<dbReference type="NCBIfam" id="TIGR00674">
    <property type="entry name" value="dapA"/>
    <property type="match status" value="1"/>
</dbReference>
<dbReference type="PANTHER" id="PTHR12128:SF66">
    <property type="entry name" value="4-HYDROXY-2-OXOGLUTARATE ALDOLASE, MITOCHONDRIAL"/>
    <property type="match status" value="1"/>
</dbReference>
<dbReference type="PANTHER" id="PTHR12128">
    <property type="entry name" value="DIHYDRODIPICOLINATE SYNTHASE"/>
    <property type="match status" value="1"/>
</dbReference>
<dbReference type="Pfam" id="PF00701">
    <property type="entry name" value="DHDPS"/>
    <property type="match status" value="1"/>
</dbReference>
<dbReference type="PIRSF" id="PIRSF001365">
    <property type="entry name" value="DHDPS"/>
    <property type="match status" value="1"/>
</dbReference>
<dbReference type="PRINTS" id="PR00146">
    <property type="entry name" value="DHPICSNTHASE"/>
</dbReference>
<dbReference type="SMART" id="SM01130">
    <property type="entry name" value="DHDPS"/>
    <property type="match status" value="1"/>
</dbReference>
<dbReference type="SUPFAM" id="SSF51569">
    <property type="entry name" value="Aldolase"/>
    <property type="match status" value="1"/>
</dbReference>
<dbReference type="PROSITE" id="PS00665">
    <property type="entry name" value="DHDPS_1"/>
    <property type="match status" value="1"/>
</dbReference>
<dbReference type="PROSITE" id="PS00666">
    <property type="entry name" value="DHDPS_2"/>
    <property type="match status" value="1"/>
</dbReference>
<proteinExistence type="inferred from homology"/>
<keyword id="KW-0028">Amino-acid biosynthesis</keyword>
<keyword id="KW-0963">Cytoplasm</keyword>
<keyword id="KW-0220">Diaminopimelate biosynthesis</keyword>
<keyword id="KW-0456">Lyase</keyword>
<keyword id="KW-0457">Lysine biosynthesis</keyword>
<keyword id="KW-1185">Reference proteome</keyword>
<keyword id="KW-0704">Schiff base</keyword>
<name>DAPA_MAGMM</name>
<protein>
    <recommendedName>
        <fullName evidence="1">4-hydroxy-tetrahydrodipicolinate synthase</fullName>
        <shortName evidence="1">HTPA synthase</shortName>
        <ecNumber evidence="1">4.3.3.7</ecNumber>
    </recommendedName>
</protein>
<accession>A0LDB5</accession>
<feature type="chain" id="PRO_1000050210" description="4-hydroxy-tetrahydrodipicolinate synthase">
    <location>
        <begin position="1"/>
        <end position="292"/>
    </location>
</feature>
<feature type="active site" description="Proton donor/acceptor" evidence="1">
    <location>
        <position position="132"/>
    </location>
</feature>
<feature type="active site" description="Schiff-base intermediate with substrate" evidence="1">
    <location>
        <position position="160"/>
    </location>
</feature>
<feature type="binding site" evidence="1">
    <location>
        <position position="44"/>
    </location>
    <ligand>
        <name>pyruvate</name>
        <dbReference type="ChEBI" id="CHEBI:15361"/>
    </ligand>
</feature>
<feature type="binding site" evidence="1">
    <location>
        <position position="202"/>
    </location>
    <ligand>
        <name>pyruvate</name>
        <dbReference type="ChEBI" id="CHEBI:15361"/>
    </ligand>
</feature>
<feature type="site" description="Part of a proton relay during catalysis" evidence="1">
    <location>
        <position position="43"/>
    </location>
</feature>
<feature type="site" description="Part of a proton relay during catalysis" evidence="1">
    <location>
        <position position="106"/>
    </location>
</feature>
<sequence length="292" mass="31393">MFKGVYTALITPFKNRAVDYTALAKLVEQQINGGIHGLVPCGTTGESATLSHEEHKAVIRTVVELVQGRVKVLAGTGSNCTEESTELTCYAEEVGADGALLITPYYNKPTQAGLIAHYTTVANHTKLPVVLYNVPGRTAVDMHADTVIALSKVSNIVAIKEATGNMERASQIHKGAGSSMTLISGDDATFLPFLSVGGQGVISVTTNLAPRLVRDLWDLWHNGQINEAREVHEQLLEINGLLFCETSPIPVKAGAAMLGLCHNELRLPMTAMSEANQAKLHRAMVKLNLLEE</sequence>
<evidence type="ECO:0000255" key="1">
    <source>
        <dbReference type="HAMAP-Rule" id="MF_00418"/>
    </source>
</evidence>
<evidence type="ECO:0000305" key="2"/>
<organism>
    <name type="scientific">Magnetococcus marinus (strain ATCC BAA-1437 / JCM 17883 / MC-1)</name>
    <dbReference type="NCBI Taxonomy" id="156889"/>
    <lineage>
        <taxon>Bacteria</taxon>
        <taxon>Pseudomonadati</taxon>
        <taxon>Pseudomonadota</taxon>
        <taxon>Alphaproteobacteria</taxon>
        <taxon>Magnetococcales</taxon>
        <taxon>Magnetococcaceae</taxon>
        <taxon>Magnetococcus</taxon>
    </lineage>
</organism>
<reference key="1">
    <citation type="journal article" date="2009" name="Appl. Environ. Microbiol.">
        <title>Complete genome sequence of the chemolithoautotrophic marine magnetotactic coccus strain MC-1.</title>
        <authorList>
            <person name="Schubbe S."/>
            <person name="Williams T.J."/>
            <person name="Xie G."/>
            <person name="Kiss H.E."/>
            <person name="Brettin T.S."/>
            <person name="Martinez D."/>
            <person name="Ross C.A."/>
            <person name="Schuler D."/>
            <person name="Cox B.L."/>
            <person name="Nealson K.H."/>
            <person name="Bazylinski D.A."/>
        </authorList>
    </citation>
    <scope>NUCLEOTIDE SEQUENCE [LARGE SCALE GENOMIC DNA]</scope>
    <source>
        <strain>ATCC BAA-1437 / JCM 17883 / MC-1</strain>
    </source>
</reference>
<comment type="function">
    <text evidence="1">Catalyzes the condensation of (S)-aspartate-beta-semialdehyde [(S)-ASA] and pyruvate to 4-hydroxy-tetrahydrodipicolinate (HTPA).</text>
</comment>
<comment type="catalytic activity">
    <reaction evidence="1">
        <text>L-aspartate 4-semialdehyde + pyruvate = (2S,4S)-4-hydroxy-2,3,4,5-tetrahydrodipicolinate + H2O + H(+)</text>
        <dbReference type="Rhea" id="RHEA:34171"/>
        <dbReference type="ChEBI" id="CHEBI:15361"/>
        <dbReference type="ChEBI" id="CHEBI:15377"/>
        <dbReference type="ChEBI" id="CHEBI:15378"/>
        <dbReference type="ChEBI" id="CHEBI:67139"/>
        <dbReference type="ChEBI" id="CHEBI:537519"/>
        <dbReference type="EC" id="4.3.3.7"/>
    </reaction>
</comment>
<comment type="pathway">
    <text evidence="1">Amino-acid biosynthesis; L-lysine biosynthesis via DAP pathway; (S)-tetrahydrodipicolinate from L-aspartate: step 3/4.</text>
</comment>
<comment type="subunit">
    <text evidence="1">Homotetramer; dimer of dimers.</text>
</comment>
<comment type="subcellular location">
    <subcellularLocation>
        <location evidence="1">Cytoplasm</location>
    </subcellularLocation>
</comment>
<comment type="similarity">
    <text evidence="1">Belongs to the DapA family.</text>
</comment>
<comment type="caution">
    <text evidence="2">Was originally thought to be a dihydrodipicolinate synthase (DHDPS), catalyzing the condensation of (S)-aspartate-beta-semialdehyde [(S)-ASA] and pyruvate to dihydrodipicolinate (DHDP). However, it was shown in E.coli that the product of the enzymatic reaction is not dihydrodipicolinate but in fact (4S)-4-hydroxy-2,3,4,5-tetrahydro-(2S)-dipicolinic acid (HTPA), and that the consecutive dehydration reaction leading to DHDP is not spontaneous but catalyzed by DapB.</text>
</comment>
<gene>
    <name evidence="1" type="primary">dapA</name>
    <name type="ordered locus">Mmc1_3473</name>
</gene>